<gene>
    <name evidence="1" type="primary">tolB</name>
    <name type="ordered locus">Bcep18194_A3889</name>
</gene>
<dbReference type="EMBL" id="CP000151">
    <property type="protein sequence ID" value="ABB07488.1"/>
    <property type="molecule type" value="Genomic_DNA"/>
</dbReference>
<dbReference type="RefSeq" id="WP_011351073.1">
    <property type="nucleotide sequence ID" value="NZ_CADFCT010000005.1"/>
</dbReference>
<dbReference type="SMR" id="Q39J78"/>
<dbReference type="GeneID" id="45093794"/>
<dbReference type="KEGG" id="bur:Bcep18194_A3889"/>
<dbReference type="PATRIC" id="fig|482957.22.peg.759"/>
<dbReference type="HOGENOM" id="CLU_047123_0_0_4"/>
<dbReference type="Proteomes" id="UP000002705">
    <property type="component" value="Chromosome 1"/>
</dbReference>
<dbReference type="GO" id="GO:0042597">
    <property type="term" value="C:periplasmic space"/>
    <property type="evidence" value="ECO:0007669"/>
    <property type="project" value="UniProtKB-SubCell"/>
</dbReference>
<dbReference type="GO" id="GO:0051301">
    <property type="term" value="P:cell division"/>
    <property type="evidence" value="ECO:0007669"/>
    <property type="project" value="UniProtKB-UniRule"/>
</dbReference>
<dbReference type="GO" id="GO:0017038">
    <property type="term" value="P:protein import"/>
    <property type="evidence" value="ECO:0007669"/>
    <property type="project" value="InterPro"/>
</dbReference>
<dbReference type="Gene3D" id="2.120.10.30">
    <property type="entry name" value="TolB, C-terminal domain"/>
    <property type="match status" value="1"/>
</dbReference>
<dbReference type="Gene3D" id="3.40.50.10070">
    <property type="entry name" value="TolB, N-terminal domain"/>
    <property type="match status" value="1"/>
</dbReference>
<dbReference type="HAMAP" id="MF_00671">
    <property type="entry name" value="TolB"/>
    <property type="match status" value="1"/>
</dbReference>
<dbReference type="InterPro" id="IPR011042">
    <property type="entry name" value="6-blade_b-propeller_TolB-like"/>
</dbReference>
<dbReference type="InterPro" id="IPR011659">
    <property type="entry name" value="PD40"/>
</dbReference>
<dbReference type="InterPro" id="IPR014167">
    <property type="entry name" value="Tol-Pal_TolB"/>
</dbReference>
<dbReference type="InterPro" id="IPR007195">
    <property type="entry name" value="TolB_N"/>
</dbReference>
<dbReference type="NCBIfam" id="TIGR02800">
    <property type="entry name" value="propeller_TolB"/>
    <property type="match status" value="1"/>
</dbReference>
<dbReference type="PANTHER" id="PTHR36842:SF1">
    <property type="entry name" value="PROTEIN TOLB"/>
    <property type="match status" value="1"/>
</dbReference>
<dbReference type="PANTHER" id="PTHR36842">
    <property type="entry name" value="PROTEIN TOLB HOMOLOG"/>
    <property type="match status" value="1"/>
</dbReference>
<dbReference type="Pfam" id="PF07676">
    <property type="entry name" value="PD40"/>
    <property type="match status" value="5"/>
</dbReference>
<dbReference type="Pfam" id="PF04052">
    <property type="entry name" value="TolB_N"/>
    <property type="match status" value="1"/>
</dbReference>
<dbReference type="SUPFAM" id="SSF52964">
    <property type="entry name" value="TolB, N-terminal domain"/>
    <property type="match status" value="1"/>
</dbReference>
<dbReference type="SUPFAM" id="SSF69304">
    <property type="entry name" value="Tricorn protease N-terminal domain"/>
    <property type="match status" value="1"/>
</dbReference>
<accession>Q39J78</accession>
<name>TOLB_BURL3</name>
<organism>
    <name type="scientific">Burkholderia lata (strain ATCC 17760 / DSM 23089 / LMG 22485 / NCIMB 9086 / R18194 / 383)</name>
    <dbReference type="NCBI Taxonomy" id="482957"/>
    <lineage>
        <taxon>Bacteria</taxon>
        <taxon>Pseudomonadati</taxon>
        <taxon>Pseudomonadota</taxon>
        <taxon>Betaproteobacteria</taxon>
        <taxon>Burkholderiales</taxon>
        <taxon>Burkholderiaceae</taxon>
        <taxon>Burkholderia</taxon>
        <taxon>Burkholderia cepacia complex</taxon>
    </lineage>
</organism>
<sequence>MSLMTKLGFRALVASCLITAGSAANAQVNVLITGVGSTQFPIATANFANEANLPQQVTSIVRADLARSGKFTNIDAGSTPVPESASVDLGAWKAKGANAFVAGSVNREANGQYKVNFILYDTVKQQSLGGLSLTATDTTLRTAGHKIADYIYQKLLGVRGVFATRLSYVIKTGNRYQLQISDSDGQNARIALSSTEPIISPSWSPSGTKVAYVSFERKKPIVYIHDLPTGRRYIVSDQKGNNSAPAWSPDSNTLAVALSLTGNTQIYTVNSTGGGLRRLTQSSSIDTEPFYSPDGHWIYFTSDRGGAPQIYRMPAQGESAGAAQRVTFTGSYNTSPRISPDGKLLAYISRTGGGFKLYVQDLQSGAANAITNTNRDESPSFAANGQYLLYATQSGGRNVLAAVPSDGSAPPQILSVQGGSVREPSWGPFMQ</sequence>
<proteinExistence type="inferred from homology"/>
<keyword id="KW-0131">Cell cycle</keyword>
<keyword id="KW-0132">Cell division</keyword>
<keyword id="KW-0574">Periplasm</keyword>
<keyword id="KW-0732">Signal</keyword>
<comment type="function">
    <text evidence="1">Part of the Tol-Pal system, which plays a role in outer membrane invagination during cell division and is important for maintaining outer membrane integrity.</text>
</comment>
<comment type="subunit">
    <text evidence="1">The Tol-Pal system is composed of five core proteins: the inner membrane proteins TolA, TolQ and TolR, the periplasmic protein TolB and the outer membrane protein Pal. They form a network linking the inner and outer membranes and the peptidoglycan layer.</text>
</comment>
<comment type="subcellular location">
    <subcellularLocation>
        <location evidence="1">Periplasm</location>
    </subcellularLocation>
</comment>
<comment type="similarity">
    <text evidence="1">Belongs to the TolB family.</text>
</comment>
<protein>
    <recommendedName>
        <fullName evidence="1">Tol-Pal system protein TolB</fullName>
    </recommendedName>
</protein>
<reference key="1">
    <citation type="submission" date="2005-10" db="EMBL/GenBank/DDBJ databases">
        <title>Complete sequence of chromosome 1 of Burkholderia sp. 383.</title>
        <authorList>
            <consortium name="US DOE Joint Genome Institute"/>
            <person name="Copeland A."/>
            <person name="Lucas S."/>
            <person name="Lapidus A."/>
            <person name="Barry K."/>
            <person name="Detter J.C."/>
            <person name="Glavina T."/>
            <person name="Hammon N."/>
            <person name="Israni S."/>
            <person name="Pitluck S."/>
            <person name="Chain P."/>
            <person name="Malfatti S."/>
            <person name="Shin M."/>
            <person name="Vergez L."/>
            <person name="Schmutz J."/>
            <person name="Larimer F."/>
            <person name="Land M."/>
            <person name="Kyrpides N."/>
            <person name="Lykidis A."/>
            <person name="Richardson P."/>
        </authorList>
    </citation>
    <scope>NUCLEOTIDE SEQUENCE [LARGE SCALE GENOMIC DNA]</scope>
    <source>
        <strain>ATCC 17760 / DSM 23089 / LMG 22485 / NCIMB 9086 / R18194 / 383</strain>
    </source>
</reference>
<evidence type="ECO:0000255" key="1">
    <source>
        <dbReference type="HAMAP-Rule" id="MF_00671"/>
    </source>
</evidence>
<evidence type="ECO:0000256" key="2">
    <source>
        <dbReference type="SAM" id="MobiDB-lite"/>
    </source>
</evidence>
<feature type="signal peptide" evidence="1">
    <location>
        <begin position="1"/>
        <end position="26"/>
    </location>
</feature>
<feature type="chain" id="PRO_0000259036" description="Tol-Pal system protein TolB" evidence="1">
    <location>
        <begin position="27"/>
        <end position="431"/>
    </location>
</feature>
<feature type="region of interest" description="Disordered" evidence="2">
    <location>
        <begin position="411"/>
        <end position="431"/>
    </location>
</feature>